<dbReference type="EMBL" id="CP000378">
    <property type="protein sequence ID" value="ABF75330.1"/>
    <property type="molecule type" value="Genomic_DNA"/>
</dbReference>
<dbReference type="SMR" id="Q1BYH5"/>
<dbReference type="HOGENOM" id="CLU_072144_1_0_4"/>
<dbReference type="GO" id="GO:0005737">
    <property type="term" value="C:cytoplasm"/>
    <property type="evidence" value="ECO:0007669"/>
    <property type="project" value="UniProtKB-SubCell"/>
</dbReference>
<dbReference type="GO" id="GO:0005525">
    <property type="term" value="F:GTP binding"/>
    <property type="evidence" value="ECO:0007669"/>
    <property type="project" value="UniProtKB-KW"/>
</dbReference>
<dbReference type="GO" id="GO:0003924">
    <property type="term" value="F:GTPase activity"/>
    <property type="evidence" value="ECO:0007669"/>
    <property type="project" value="InterPro"/>
</dbReference>
<dbReference type="GO" id="GO:0016151">
    <property type="term" value="F:nickel cation binding"/>
    <property type="evidence" value="ECO:0007669"/>
    <property type="project" value="UniProtKB-UniRule"/>
</dbReference>
<dbReference type="GO" id="GO:0043419">
    <property type="term" value="P:urea catabolic process"/>
    <property type="evidence" value="ECO:0007669"/>
    <property type="project" value="InterPro"/>
</dbReference>
<dbReference type="CDD" id="cd05540">
    <property type="entry name" value="UreG"/>
    <property type="match status" value="1"/>
</dbReference>
<dbReference type="FunFam" id="3.40.50.300:FF:000208">
    <property type="entry name" value="Urease accessory protein UreG"/>
    <property type="match status" value="1"/>
</dbReference>
<dbReference type="Gene3D" id="3.40.50.300">
    <property type="entry name" value="P-loop containing nucleotide triphosphate hydrolases"/>
    <property type="match status" value="1"/>
</dbReference>
<dbReference type="HAMAP" id="MF_01389">
    <property type="entry name" value="UreG"/>
    <property type="match status" value="1"/>
</dbReference>
<dbReference type="InterPro" id="IPR003495">
    <property type="entry name" value="CobW/HypB/UreG_nucleotide-bd"/>
</dbReference>
<dbReference type="InterPro" id="IPR027417">
    <property type="entry name" value="P-loop_NTPase"/>
</dbReference>
<dbReference type="InterPro" id="IPR004400">
    <property type="entry name" value="UreG"/>
</dbReference>
<dbReference type="NCBIfam" id="TIGR00101">
    <property type="entry name" value="ureG"/>
    <property type="match status" value="1"/>
</dbReference>
<dbReference type="PANTHER" id="PTHR31715">
    <property type="entry name" value="UREASE ACCESSORY PROTEIN G"/>
    <property type="match status" value="1"/>
</dbReference>
<dbReference type="PANTHER" id="PTHR31715:SF0">
    <property type="entry name" value="UREASE ACCESSORY PROTEIN G"/>
    <property type="match status" value="1"/>
</dbReference>
<dbReference type="Pfam" id="PF02492">
    <property type="entry name" value="cobW"/>
    <property type="match status" value="1"/>
</dbReference>
<dbReference type="PIRSF" id="PIRSF005624">
    <property type="entry name" value="Ni-bind_GTPase"/>
    <property type="match status" value="1"/>
</dbReference>
<dbReference type="SUPFAM" id="SSF52540">
    <property type="entry name" value="P-loop containing nucleoside triphosphate hydrolases"/>
    <property type="match status" value="1"/>
</dbReference>
<gene>
    <name evidence="1" type="primary">ureG</name>
    <name type="ordered locus">Bcen_0418</name>
</gene>
<comment type="function">
    <text evidence="1">Facilitates the functional incorporation of the urease nickel metallocenter. This process requires GTP hydrolysis, probably effectuated by UreG.</text>
</comment>
<comment type="subunit">
    <text evidence="1">Homodimer. UreD, UreF and UreG form a complex that acts as a GTP-hydrolysis-dependent molecular chaperone, activating the urease apoprotein by helping to assemble the nickel containing metallocenter of UreC. The UreE protein probably delivers the nickel.</text>
</comment>
<comment type="subcellular location">
    <subcellularLocation>
        <location evidence="1">Cytoplasm</location>
    </subcellularLocation>
</comment>
<comment type="similarity">
    <text evidence="1">Belongs to the SIMIBI class G3E GTPase family. UreG subfamily.</text>
</comment>
<evidence type="ECO:0000255" key="1">
    <source>
        <dbReference type="HAMAP-Rule" id="MF_01389"/>
    </source>
</evidence>
<organism>
    <name type="scientific">Burkholderia orbicola (strain AU 1054)</name>
    <dbReference type="NCBI Taxonomy" id="331271"/>
    <lineage>
        <taxon>Bacteria</taxon>
        <taxon>Pseudomonadati</taxon>
        <taxon>Pseudomonadota</taxon>
        <taxon>Betaproteobacteria</taxon>
        <taxon>Burkholderiales</taxon>
        <taxon>Burkholderiaceae</taxon>
        <taxon>Burkholderia</taxon>
        <taxon>Burkholderia cepacia complex</taxon>
        <taxon>Burkholderia orbicola</taxon>
    </lineage>
</organism>
<reference key="1">
    <citation type="submission" date="2006-05" db="EMBL/GenBank/DDBJ databases">
        <title>Complete sequence of chromosome 1 of Burkholderia cenocepacia AU 1054.</title>
        <authorList>
            <consortium name="US DOE Joint Genome Institute"/>
            <person name="Copeland A."/>
            <person name="Lucas S."/>
            <person name="Lapidus A."/>
            <person name="Barry K."/>
            <person name="Detter J.C."/>
            <person name="Glavina del Rio T."/>
            <person name="Hammon N."/>
            <person name="Israni S."/>
            <person name="Dalin E."/>
            <person name="Tice H."/>
            <person name="Pitluck S."/>
            <person name="Chain P."/>
            <person name="Malfatti S."/>
            <person name="Shin M."/>
            <person name="Vergez L."/>
            <person name="Schmutz J."/>
            <person name="Larimer F."/>
            <person name="Land M."/>
            <person name="Hauser L."/>
            <person name="Kyrpides N."/>
            <person name="Lykidis A."/>
            <person name="LiPuma J.J."/>
            <person name="Konstantinidis K."/>
            <person name="Tiedje J.M."/>
            <person name="Richardson P."/>
        </authorList>
    </citation>
    <scope>NUCLEOTIDE SEQUENCE [LARGE SCALE GENOMIC DNA]</scope>
    <source>
        <strain>AU 1054</strain>
    </source>
</reference>
<proteinExistence type="inferred from homology"/>
<name>UREG_BURO1</name>
<accession>Q1BYH5</accession>
<keyword id="KW-0143">Chaperone</keyword>
<keyword id="KW-0963">Cytoplasm</keyword>
<keyword id="KW-0342">GTP-binding</keyword>
<keyword id="KW-0996">Nickel insertion</keyword>
<keyword id="KW-0547">Nucleotide-binding</keyword>
<protein>
    <recommendedName>
        <fullName evidence="1">Urease accessory protein UreG</fullName>
    </recommendedName>
</protein>
<sequence length="215" mass="23063">MNAPAPSSIRRTKKLPPLRVGIGGPVGSGKTTLLEMLCKAMRDRYDLVAITNDIYTKEDQRLLTVAGALPEERIMGVETGGCPHTAIREDASINLEAVDRMLARFPDADIVFIESGGDNLAATFSPELSDLTIYVIDVAGGEKIPRKGGPGITKSDLLVINKTDLAPLVGANLDVMASDTRKMRGERPYVMTNLKALDGVADVIAFIEKKGLLTV</sequence>
<feature type="chain" id="PRO_0000347367" description="Urease accessory protein UreG">
    <location>
        <begin position="1"/>
        <end position="215"/>
    </location>
</feature>
<feature type="binding site" evidence="1">
    <location>
        <begin position="24"/>
        <end position="31"/>
    </location>
    <ligand>
        <name>GTP</name>
        <dbReference type="ChEBI" id="CHEBI:37565"/>
    </ligand>
</feature>